<feature type="chain" id="PRO_0000298223" description="Cell division topological specificity factor">
    <location>
        <begin position="1"/>
        <end position="89"/>
    </location>
</feature>
<evidence type="ECO:0000255" key="1">
    <source>
        <dbReference type="HAMAP-Rule" id="MF_00262"/>
    </source>
</evidence>
<protein>
    <recommendedName>
        <fullName evidence="1">Cell division topological specificity factor</fullName>
    </recommendedName>
</protein>
<accession>Q1C7Z6</accession>
<name>MINE_YERPA</name>
<organism>
    <name type="scientific">Yersinia pestis bv. Antiqua (strain Antiqua)</name>
    <dbReference type="NCBI Taxonomy" id="360102"/>
    <lineage>
        <taxon>Bacteria</taxon>
        <taxon>Pseudomonadati</taxon>
        <taxon>Pseudomonadota</taxon>
        <taxon>Gammaproteobacteria</taxon>
        <taxon>Enterobacterales</taxon>
        <taxon>Yersiniaceae</taxon>
        <taxon>Yersinia</taxon>
    </lineage>
</organism>
<gene>
    <name evidence="1" type="primary">minE</name>
    <name type="ordered locus">YPA_1459</name>
</gene>
<keyword id="KW-0131">Cell cycle</keyword>
<keyword id="KW-0132">Cell division</keyword>
<proteinExistence type="inferred from homology"/>
<comment type="function">
    <text evidence="1">Prevents the cell division inhibition by proteins MinC and MinD at internal division sites while permitting inhibition at polar sites. This ensures cell division at the proper site by restricting the formation of a division septum at the midpoint of the long axis of the cell.</text>
</comment>
<comment type="similarity">
    <text evidence="1">Belongs to the MinE family.</text>
</comment>
<dbReference type="EMBL" id="CP000308">
    <property type="protein sequence ID" value="ABG13426.1"/>
    <property type="molecule type" value="Genomic_DNA"/>
</dbReference>
<dbReference type="RefSeq" id="WP_002211180.1">
    <property type="nucleotide sequence ID" value="NZ_CP009906.1"/>
</dbReference>
<dbReference type="SMR" id="Q1C7Z6"/>
<dbReference type="GeneID" id="97456410"/>
<dbReference type="KEGG" id="ypa:YPA_1459"/>
<dbReference type="Proteomes" id="UP000001971">
    <property type="component" value="Chromosome"/>
</dbReference>
<dbReference type="GO" id="GO:0051301">
    <property type="term" value="P:cell division"/>
    <property type="evidence" value="ECO:0007669"/>
    <property type="project" value="UniProtKB-KW"/>
</dbReference>
<dbReference type="GO" id="GO:0032955">
    <property type="term" value="P:regulation of division septum assembly"/>
    <property type="evidence" value="ECO:0007669"/>
    <property type="project" value="InterPro"/>
</dbReference>
<dbReference type="FunFam" id="3.30.1070.10:FF:000001">
    <property type="entry name" value="Cell division topological specificity factor"/>
    <property type="match status" value="1"/>
</dbReference>
<dbReference type="Gene3D" id="3.30.1070.10">
    <property type="entry name" value="Cell division topological specificity factor MinE"/>
    <property type="match status" value="1"/>
</dbReference>
<dbReference type="HAMAP" id="MF_00262">
    <property type="entry name" value="MinE"/>
    <property type="match status" value="1"/>
</dbReference>
<dbReference type="InterPro" id="IPR005527">
    <property type="entry name" value="MinE"/>
</dbReference>
<dbReference type="InterPro" id="IPR036707">
    <property type="entry name" value="MinE_sf"/>
</dbReference>
<dbReference type="NCBIfam" id="TIGR01215">
    <property type="entry name" value="minE"/>
    <property type="match status" value="1"/>
</dbReference>
<dbReference type="NCBIfam" id="NF001422">
    <property type="entry name" value="PRK00296.1"/>
    <property type="match status" value="1"/>
</dbReference>
<dbReference type="Pfam" id="PF03776">
    <property type="entry name" value="MinE"/>
    <property type="match status" value="1"/>
</dbReference>
<dbReference type="SUPFAM" id="SSF55229">
    <property type="entry name" value="Cell division protein MinE topological specificity domain"/>
    <property type="match status" value="1"/>
</dbReference>
<sequence length="89" mass="10332">MALLDFFLSRKKPTANIAKERLQIIVAERRRGDSEPHYLPDLKRDILAVICKYIQIDPEMLHVQFEQKGDDISVLELNVTLPETEETPK</sequence>
<reference key="1">
    <citation type="journal article" date="2006" name="J. Bacteriol.">
        <title>Complete genome sequence of Yersinia pestis strains Antiqua and Nepal516: evidence of gene reduction in an emerging pathogen.</title>
        <authorList>
            <person name="Chain P.S.G."/>
            <person name="Hu P."/>
            <person name="Malfatti S.A."/>
            <person name="Radnedge L."/>
            <person name="Larimer F."/>
            <person name="Vergez L.M."/>
            <person name="Worsham P."/>
            <person name="Chu M.C."/>
            <person name="Andersen G.L."/>
        </authorList>
    </citation>
    <scope>NUCLEOTIDE SEQUENCE [LARGE SCALE GENOMIC DNA]</scope>
    <source>
        <strain>Antiqua</strain>
    </source>
</reference>